<gene>
    <name evidence="1" type="primary">ppnP</name>
    <name type="ordered locus">YPDSF_2843</name>
</gene>
<evidence type="ECO:0000255" key="1">
    <source>
        <dbReference type="HAMAP-Rule" id="MF_01537"/>
    </source>
</evidence>
<accession>A4TPJ3</accession>
<keyword id="KW-0328">Glycosyltransferase</keyword>
<keyword id="KW-0808">Transferase</keyword>
<feature type="chain" id="PRO_0000298738" description="Pyrimidine/purine nucleoside phosphorylase">
    <location>
        <begin position="1"/>
        <end position="95"/>
    </location>
</feature>
<sequence length="95" mass="10427">MLKFNEYFTGKVKSIGFDSDSIGPASVGVMEKGEYTFSTAKAEEMTVITGSLKVLIPGSPDWQTFMPGETFYIPGESEFNLQVAEASSYLCKYLS</sequence>
<name>PPNP_YERPP</name>
<comment type="function">
    <text evidence="1">Catalyzes the phosphorolysis of diverse nucleosides, yielding D-ribose 1-phosphate and the respective free bases. Can use uridine, adenosine, guanosine, cytidine, thymidine, inosine and xanthosine as substrates. Also catalyzes the reverse reactions.</text>
</comment>
<comment type="catalytic activity">
    <reaction evidence="1">
        <text>a purine D-ribonucleoside + phosphate = a purine nucleobase + alpha-D-ribose 1-phosphate</text>
        <dbReference type="Rhea" id="RHEA:19805"/>
        <dbReference type="ChEBI" id="CHEBI:26386"/>
        <dbReference type="ChEBI" id="CHEBI:43474"/>
        <dbReference type="ChEBI" id="CHEBI:57720"/>
        <dbReference type="ChEBI" id="CHEBI:142355"/>
        <dbReference type="EC" id="2.4.2.1"/>
    </reaction>
</comment>
<comment type="catalytic activity">
    <reaction evidence="1">
        <text>adenosine + phosphate = alpha-D-ribose 1-phosphate + adenine</text>
        <dbReference type="Rhea" id="RHEA:27642"/>
        <dbReference type="ChEBI" id="CHEBI:16335"/>
        <dbReference type="ChEBI" id="CHEBI:16708"/>
        <dbReference type="ChEBI" id="CHEBI:43474"/>
        <dbReference type="ChEBI" id="CHEBI:57720"/>
        <dbReference type="EC" id="2.4.2.1"/>
    </reaction>
</comment>
<comment type="catalytic activity">
    <reaction evidence="1">
        <text>cytidine + phosphate = cytosine + alpha-D-ribose 1-phosphate</text>
        <dbReference type="Rhea" id="RHEA:52540"/>
        <dbReference type="ChEBI" id="CHEBI:16040"/>
        <dbReference type="ChEBI" id="CHEBI:17562"/>
        <dbReference type="ChEBI" id="CHEBI:43474"/>
        <dbReference type="ChEBI" id="CHEBI:57720"/>
        <dbReference type="EC" id="2.4.2.2"/>
    </reaction>
</comment>
<comment type="catalytic activity">
    <reaction evidence="1">
        <text>guanosine + phosphate = alpha-D-ribose 1-phosphate + guanine</text>
        <dbReference type="Rhea" id="RHEA:13233"/>
        <dbReference type="ChEBI" id="CHEBI:16235"/>
        <dbReference type="ChEBI" id="CHEBI:16750"/>
        <dbReference type="ChEBI" id="CHEBI:43474"/>
        <dbReference type="ChEBI" id="CHEBI:57720"/>
        <dbReference type="EC" id="2.4.2.1"/>
    </reaction>
</comment>
<comment type="catalytic activity">
    <reaction evidence="1">
        <text>inosine + phosphate = alpha-D-ribose 1-phosphate + hypoxanthine</text>
        <dbReference type="Rhea" id="RHEA:27646"/>
        <dbReference type="ChEBI" id="CHEBI:17368"/>
        <dbReference type="ChEBI" id="CHEBI:17596"/>
        <dbReference type="ChEBI" id="CHEBI:43474"/>
        <dbReference type="ChEBI" id="CHEBI:57720"/>
        <dbReference type="EC" id="2.4.2.1"/>
    </reaction>
</comment>
<comment type="catalytic activity">
    <reaction evidence="1">
        <text>thymidine + phosphate = 2-deoxy-alpha-D-ribose 1-phosphate + thymine</text>
        <dbReference type="Rhea" id="RHEA:16037"/>
        <dbReference type="ChEBI" id="CHEBI:17748"/>
        <dbReference type="ChEBI" id="CHEBI:17821"/>
        <dbReference type="ChEBI" id="CHEBI:43474"/>
        <dbReference type="ChEBI" id="CHEBI:57259"/>
        <dbReference type="EC" id="2.4.2.2"/>
    </reaction>
</comment>
<comment type="catalytic activity">
    <reaction evidence="1">
        <text>uridine + phosphate = alpha-D-ribose 1-phosphate + uracil</text>
        <dbReference type="Rhea" id="RHEA:24388"/>
        <dbReference type="ChEBI" id="CHEBI:16704"/>
        <dbReference type="ChEBI" id="CHEBI:17568"/>
        <dbReference type="ChEBI" id="CHEBI:43474"/>
        <dbReference type="ChEBI" id="CHEBI:57720"/>
        <dbReference type="EC" id="2.4.2.2"/>
    </reaction>
</comment>
<comment type="catalytic activity">
    <reaction evidence="1">
        <text>xanthosine + phosphate = alpha-D-ribose 1-phosphate + xanthine</text>
        <dbReference type="Rhea" id="RHEA:27638"/>
        <dbReference type="ChEBI" id="CHEBI:17712"/>
        <dbReference type="ChEBI" id="CHEBI:18107"/>
        <dbReference type="ChEBI" id="CHEBI:43474"/>
        <dbReference type="ChEBI" id="CHEBI:57720"/>
        <dbReference type="EC" id="2.4.2.1"/>
    </reaction>
</comment>
<comment type="similarity">
    <text evidence="1">Belongs to the nucleoside phosphorylase PpnP family.</text>
</comment>
<organism>
    <name type="scientific">Yersinia pestis (strain Pestoides F)</name>
    <dbReference type="NCBI Taxonomy" id="386656"/>
    <lineage>
        <taxon>Bacteria</taxon>
        <taxon>Pseudomonadati</taxon>
        <taxon>Pseudomonadota</taxon>
        <taxon>Gammaproteobacteria</taxon>
        <taxon>Enterobacterales</taxon>
        <taxon>Yersiniaceae</taxon>
        <taxon>Yersinia</taxon>
    </lineage>
</organism>
<proteinExistence type="inferred from homology"/>
<protein>
    <recommendedName>
        <fullName evidence="1">Pyrimidine/purine nucleoside phosphorylase</fullName>
        <ecNumber evidence="1">2.4.2.1</ecNumber>
        <ecNumber evidence="1">2.4.2.2</ecNumber>
    </recommendedName>
    <alternativeName>
        <fullName evidence="1">Adenosine phosphorylase</fullName>
    </alternativeName>
    <alternativeName>
        <fullName evidence="1">Cytidine phosphorylase</fullName>
    </alternativeName>
    <alternativeName>
        <fullName evidence="1">Guanosine phosphorylase</fullName>
    </alternativeName>
    <alternativeName>
        <fullName evidence="1">Inosine phosphorylase</fullName>
    </alternativeName>
    <alternativeName>
        <fullName evidence="1">Thymidine phosphorylase</fullName>
    </alternativeName>
    <alternativeName>
        <fullName evidence="1">Uridine phosphorylase</fullName>
    </alternativeName>
    <alternativeName>
        <fullName evidence="1">Xanthosine phosphorylase</fullName>
    </alternativeName>
</protein>
<reference key="1">
    <citation type="submission" date="2007-02" db="EMBL/GenBank/DDBJ databases">
        <title>Complete sequence of chromosome of Yersinia pestis Pestoides F.</title>
        <authorList>
            <consortium name="US DOE Joint Genome Institute"/>
            <person name="Copeland A."/>
            <person name="Lucas S."/>
            <person name="Lapidus A."/>
            <person name="Barry K."/>
            <person name="Detter J.C."/>
            <person name="Glavina del Rio T."/>
            <person name="Hammon N."/>
            <person name="Israni S."/>
            <person name="Dalin E."/>
            <person name="Tice H."/>
            <person name="Pitluck S."/>
            <person name="Di Bartolo G."/>
            <person name="Chain P."/>
            <person name="Malfatti S."/>
            <person name="Shin M."/>
            <person name="Vergez L."/>
            <person name="Schmutz J."/>
            <person name="Larimer F."/>
            <person name="Land M."/>
            <person name="Hauser L."/>
            <person name="Worsham P."/>
            <person name="Chu M."/>
            <person name="Bearden S."/>
            <person name="Garcia E."/>
            <person name="Richardson P."/>
        </authorList>
    </citation>
    <scope>NUCLEOTIDE SEQUENCE [LARGE SCALE GENOMIC DNA]</scope>
    <source>
        <strain>Pestoides F</strain>
    </source>
</reference>
<dbReference type="EC" id="2.4.2.1" evidence="1"/>
<dbReference type="EC" id="2.4.2.2" evidence="1"/>
<dbReference type="EMBL" id="CP000668">
    <property type="protein sequence ID" value="ABP41205.1"/>
    <property type="molecule type" value="Genomic_DNA"/>
</dbReference>
<dbReference type="RefSeq" id="WP_002208692.1">
    <property type="nucleotide sequence ID" value="NZ_CP009715.1"/>
</dbReference>
<dbReference type="SMR" id="A4TPJ3"/>
<dbReference type="GeneID" id="57975503"/>
<dbReference type="KEGG" id="ypp:YPDSF_2843"/>
<dbReference type="PATRIC" id="fig|386656.14.peg.104"/>
<dbReference type="GO" id="GO:0005829">
    <property type="term" value="C:cytosol"/>
    <property type="evidence" value="ECO:0007669"/>
    <property type="project" value="TreeGrafter"/>
</dbReference>
<dbReference type="GO" id="GO:0047975">
    <property type="term" value="F:guanosine phosphorylase activity"/>
    <property type="evidence" value="ECO:0007669"/>
    <property type="project" value="UniProtKB-EC"/>
</dbReference>
<dbReference type="GO" id="GO:0004731">
    <property type="term" value="F:purine-nucleoside phosphorylase activity"/>
    <property type="evidence" value="ECO:0007669"/>
    <property type="project" value="UniProtKB-UniRule"/>
</dbReference>
<dbReference type="GO" id="GO:0009032">
    <property type="term" value="F:thymidine phosphorylase activity"/>
    <property type="evidence" value="ECO:0007669"/>
    <property type="project" value="UniProtKB-EC"/>
</dbReference>
<dbReference type="GO" id="GO:0004850">
    <property type="term" value="F:uridine phosphorylase activity"/>
    <property type="evidence" value="ECO:0007669"/>
    <property type="project" value="UniProtKB-EC"/>
</dbReference>
<dbReference type="FunFam" id="2.60.120.10:FF:000016">
    <property type="entry name" value="Pyrimidine/purine nucleoside phosphorylase"/>
    <property type="match status" value="1"/>
</dbReference>
<dbReference type="Gene3D" id="2.60.120.10">
    <property type="entry name" value="Jelly Rolls"/>
    <property type="match status" value="1"/>
</dbReference>
<dbReference type="HAMAP" id="MF_01537">
    <property type="entry name" value="Nucleos_phosphorylase_PpnP"/>
    <property type="match status" value="1"/>
</dbReference>
<dbReference type="InterPro" id="IPR009664">
    <property type="entry name" value="Ppnp"/>
</dbReference>
<dbReference type="InterPro" id="IPR014710">
    <property type="entry name" value="RmlC-like_jellyroll"/>
</dbReference>
<dbReference type="InterPro" id="IPR011051">
    <property type="entry name" value="RmlC_Cupin_sf"/>
</dbReference>
<dbReference type="NCBIfam" id="NF007875">
    <property type="entry name" value="PRK10579.1"/>
    <property type="match status" value="1"/>
</dbReference>
<dbReference type="PANTHER" id="PTHR36540">
    <property type="entry name" value="PYRIMIDINE/PURINE NUCLEOSIDE PHOSPHORYLASE"/>
    <property type="match status" value="1"/>
</dbReference>
<dbReference type="PANTHER" id="PTHR36540:SF1">
    <property type="entry name" value="PYRIMIDINE_PURINE NUCLEOSIDE PHOSPHORYLASE"/>
    <property type="match status" value="1"/>
</dbReference>
<dbReference type="Pfam" id="PF06865">
    <property type="entry name" value="Ppnp"/>
    <property type="match status" value="1"/>
</dbReference>
<dbReference type="SUPFAM" id="SSF51182">
    <property type="entry name" value="RmlC-like cupins"/>
    <property type="match status" value="1"/>
</dbReference>